<comment type="function">
    <text evidence="2 3 4">Depending on the conditions (growth phase and medium), acts as a positive or negative regulator of gadA and gadBC. Repression occurs directly or via the repression of the expression of gadX. Activation occurs directly by the binding of GadW to the gadA and gadBC promoters.</text>
</comment>
<comment type="subunit">
    <text evidence="2">Homodimer.</text>
</comment>
<comment type="induction">
    <text evidence="4">Expression can be repressed by GadX, depending on the conditions.</text>
</comment>
<comment type="miscellaneous">
    <text>GadX and GadW are part of a complex system required for acid resistance via the regulation of gadA and gadBC. Many of the described circuits use mutants missing one of the network components. In the wild-type situation, however, many of the scenarios are not easily observed.</text>
</comment>
<proteinExistence type="evidence at protein level"/>
<accession>P63201</accession>
<accession>P37638</accession>
<accession>Q2M7H7</accession>
<sequence>MTHVCSVILIRRSFDIYHEQQKISLHNESILLLEKNLADDFAFCSPDTRRLDIDELTVCHYLQNIRQLPRNLGLHSKDRLLINQSPPMPLVTAIFDSFNESGVNSPILSNMLYLSCLSMFSHKKELIPLLFNSISTVSGKVERLISFDIAKRWYLRDIAERMYTSESLIKKKLQDENTCFSKILLASRMSMARRLLELRQIPLHTIAEKCGYSSTSYFINTFRQYYGVTPHQFAQHSPGTFS</sequence>
<keyword id="KW-0010">Activator</keyword>
<keyword id="KW-0238">DNA-binding</keyword>
<keyword id="KW-1185">Reference proteome</keyword>
<keyword id="KW-0678">Repressor</keyword>
<keyword id="KW-0804">Transcription</keyword>
<keyword id="KW-0805">Transcription regulation</keyword>
<organism>
    <name type="scientific">Escherichia coli (strain K12)</name>
    <dbReference type="NCBI Taxonomy" id="83333"/>
    <lineage>
        <taxon>Bacteria</taxon>
        <taxon>Pseudomonadati</taxon>
        <taxon>Pseudomonadota</taxon>
        <taxon>Gammaproteobacteria</taxon>
        <taxon>Enterobacterales</taxon>
        <taxon>Enterobacteriaceae</taxon>
        <taxon>Escherichia</taxon>
    </lineage>
</organism>
<evidence type="ECO:0000255" key="1">
    <source>
        <dbReference type="PROSITE-ProRule" id="PRU00593"/>
    </source>
</evidence>
<evidence type="ECO:0000269" key="2">
    <source>
    </source>
</evidence>
<evidence type="ECO:0000269" key="3">
    <source>
    </source>
</evidence>
<evidence type="ECO:0000269" key="4">
    <source>
    </source>
</evidence>
<gene>
    <name type="primary">gadW</name>
    <name type="synonym">yhiW</name>
    <name type="ordered locus">b3515</name>
    <name type="ordered locus">JW3483</name>
</gene>
<protein>
    <recommendedName>
        <fullName>HTH-type transcriptional regulator GadW</fullName>
    </recommendedName>
</protein>
<feature type="chain" id="PRO_0000194514" description="HTH-type transcriptional regulator GadW">
    <location>
        <begin position="1"/>
        <end position="242"/>
    </location>
</feature>
<feature type="domain" description="HTH araC/xylS-type" evidence="1">
    <location>
        <begin position="139"/>
        <end position="236"/>
    </location>
</feature>
<feature type="DNA-binding region" description="H-T-H motif" evidence="1">
    <location>
        <begin position="156"/>
        <end position="177"/>
    </location>
</feature>
<feature type="DNA-binding region" description="H-T-H motif" evidence="1">
    <location>
        <begin position="203"/>
        <end position="226"/>
    </location>
</feature>
<reference key="1">
    <citation type="journal article" date="1994" name="Nucleic Acids Res.">
        <title>Analysis of the Escherichia coli genome. V. DNA sequence of the region from 76.0 to 81.5 minutes.</title>
        <authorList>
            <person name="Sofia H.J."/>
            <person name="Burland V."/>
            <person name="Daniels D.L."/>
            <person name="Plunkett G. III"/>
            <person name="Blattner F.R."/>
        </authorList>
    </citation>
    <scope>NUCLEOTIDE SEQUENCE [LARGE SCALE GENOMIC DNA]</scope>
    <source>
        <strain>K12 / MG1655 / ATCC 47076</strain>
    </source>
</reference>
<reference key="2">
    <citation type="journal article" date="1997" name="Science">
        <title>The complete genome sequence of Escherichia coli K-12.</title>
        <authorList>
            <person name="Blattner F.R."/>
            <person name="Plunkett G. III"/>
            <person name="Bloch C.A."/>
            <person name="Perna N.T."/>
            <person name="Burland V."/>
            <person name="Riley M."/>
            <person name="Collado-Vides J."/>
            <person name="Glasner J.D."/>
            <person name="Rode C.K."/>
            <person name="Mayhew G.F."/>
            <person name="Gregor J."/>
            <person name="Davis N.W."/>
            <person name="Kirkpatrick H.A."/>
            <person name="Goeden M.A."/>
            <person name="Rose D.J."/>
            <person name="Mau B."/>
            <person name="Shao Y."/>
        </authorList>
    </citation>
    <scope>NUCLEOTIDE SEQUENCE [LARGE SCALE GENOMIC DNA]</scope>
    <source>
        <strain>K12 / MG1655 / ATCC 47076</strain>
    </source>
</reference>
<reference key="3">
    <citation type="journal article" date="2006" name="Mol. Syst. Biol.">
        <title>Highly accurate genome sequences of Escherichia coli K-12 strains MG1655 and W3110.</title>
        <authorList>
            <person name="Hayashi K."/>
            <person name="Morooka N."/>
            <person name="Yamamoto Y."/>
            <person name="Fujita K."/>
            <person name="Isono K."/>
            <person name="Choi S."/>
            <person name="Ohtsubo E."/>
            <person name="Baba T."/>
            <person name="Wanner B.L."/>
            <person name="Mori H."/>
            <person name="Horiuchi T."/>
        </authorList>
    </citation>
    <scope>NUCLEOTIDE SEQUENCE [LARGE SCALE GENOMIC DNA]</scope>
    <source>
        <strain>K12 / W3110 / ATCC 27325 / DSM 5911</strain>
    </source>
</reference>
<reference key="4">
    <citation type="journal article" date="2002" name="J. Bacteriol.">
        <title>Collaborative regulation of Escherichia coli glutamate-dependent acid resistance by two AraC-like regulators, GadX and GadW (YhiW).</title>
        <authorList>
            <person name="Ma Z."/>
            <person name="Richard H."/>
            <person name="Tucker D.L."/>
            <person name="Conway T."/>
            <person name="Foster J.W."/>
        </authorList>
    </citation>
    <scope>FUNCTION</scope>
    <scope>SUBUNIT</scope>
    <source>
        <strain>K12</strain>
    </source>
</reference>
<reference key="5">
    <citation type="journal article" date="2003" name="J. Bacteriol.">
        <title>Genes of the GadX-GadW regulon in Escherichia coli.</title>
        <authorList>
            <person name="Tucker D.L."/>
            <person name="Tucker N."/>
            <person name="Ma Z."/>
            <person name="Foster J.W."/>
            <person name="Miranda R.L."/>
            <person name="Cohen P.S."/>
            <person name="Conway T."/>
        </authorList>
    </citation>
    <scope>FUNCTION</scope>
    <source>
        <strain>K12</strain>
    </source>
</reference>
<reference key="6">
    <citation type="journal article" date="2003" name="J. Bacteriol.">
        <title>pH-dependent modulation of cyclic AMP levels and GadW-dependent repression of RpoS affect synthesis of the GadX regulator and Escherichia coli acid resistance.</title>
        <authorList>
            <person name="Ma Z."/>
            <person name="Richard H."/>
            <person name="Foster J.W."/>
        </authorList>
    </citation>
    <scope>FUNCTION</scope>
    <scope>INDUCTION</scope>
</reference>
<dbReference type="EMBL" id="U00039">
    <property type="protein sequence ID" value="AAB18491.1"/>
    <property type="molecule type" value="Genomic_DNA"/>
</dbReference>
<dbReference type="EMBL" id="U00096">
    <property type="protein sequence ID" value="AAC76540.1"/>
    <property type="molecule type" value="Genomic_DNA"/>
</dbReference>
<dbReference type="EMBL" id="AP009048">
    <property type="protein sequence ID" value="BAE77779.1"/>
    <property type="molecule type" value="Genomic_DNA"/>
</dbReference>
<dbReference type="PIR" id="S47735">
    <property type="entry name" value="S47735"/>
</dbReference>
<dbReference type="RefSeq" id="NP_417972.1">
    <property type="nucleotide sequence ID" value="NC_000913.3"/>
</dbReference>
<dbReference type="RefSeq" id="WP_000149999.1">
    <property type="nucleotide sequence ID" value="NZ_SSZK01000042.1"/>
</dbReference>
<dbReference type="BioGRID" id="4262522">
    <property type="interactions" value="98"/>
</dbReference>
<dbReference type="FunCoup" id="P63201">
    <property type="interactions" value="51"/>
</dbReference>
<dbReference type="IntAct" id="P63201">
    <property type="interactions" value="6"/>
</dbReference>
<dbReference type="STRING" id="511145.b3515"/>
<dbReference type="PaxDb" id="511145-b3515"/>
<dbReference type="EnsemblBacteria" id="AAC76540">
    <property type="protein sequence ID" value="AAC76540"/>
    <property type="gene ID" value="b3515"/>
</dbReference>
<dbReference type="GeneID" id="948029"/>
<dbReference type="KEGG" id="ecj:JW3483"/>
<dbReference type="KEGG" id="eco:b3515"/>
<dbReference type="KEGG" id="ecoc:C3026_19045"/>
<dbReference type="PATRIC" id="fig|1411691.4.peg.3203"/>
<dbReference type="EchoBASE" id="EB2153"/>
<dbReference type="eggNOG" id="COG2207">
    <property type="taxonomic scope" value="Bacteria"/>
</dbReference>
<dbReference type="HOGENOM" id="CLU_000445_81_4_6"/>
<dbReference type="InParanoid" id="P63201"/>
<dbReference type="OMA" id="FRIPHNC"/>
<dbReference type="OrthoDB" id="9783876at2"/>
<dbReference type="PhylomeDB" id="P63201"/>
<dbReference type="BioCyc" id="EcoCyc:EG12242-MONOMER"/>
<dbReference type="PRO" id="PR:P63201"/>
<dbReference type="Proteomes" id="UP000000625">
    <property type="component" value="Chromosome"/>
</dbReference>
<dbReference type="GO" id="GO:0003677">
    <property type="term" value="F:DNA binding"/>
    <property type="evidence" value="ECO:0000314"/>
    <property type="project" value="EcoCyc"/>
</dbReference>
<dbReference type="GO" id="GO:0003700">
    <property type="term" value="F:DNA-binding transcription factor activity"/>
    <property type="evidence" value="ECO:0000314"/>
    <property type="project" value="EcoCyc"/>
</dbReference>
<dbReference type="GO" id="GO:0043565">
    <property type="term" value="F:sequence-specific DNA binding"/>
    <property type="evidence" value="ECO:0007669"/>
    <property type="project" value="InterPro"/>
</dbReference>
<dbReference type="GO" id="GO:0006974">
    <property type="term" value="P:DNA damage response"/>
    <property type="evidence" value="ECO:0000270"/>
    <property type="project" value="EcoliWiki"/>
</dbReference>
<dbReference type="GO" id="GO:0006351">
    <property type="term" value="P:DNA-templated transcription"/>
    <property type="evidence" value="ECO:0000315"/>
    <property type="project" value="EcoCyc"/>
</dbReference>
<dbReference type="GO" id="GO:0006355">
    <property type="term" value="P:regulation of DNA-templated transcription"/>
    <property type="evidence" value="ECO:0000315"/>
    <property type="project" value="EcoCyc"/>
</dbReference>
<dbReference type="FunFam" id="1.10.10.60:FF:000278">
    <property type="entry name" value="HTH-type transcriptional regulator GadW"/>
    <property type="match status" value="1"/>
</dbReference>
<dbReference type="Gene3D" id="1.10.10.60">
    <property type="entry name" value="Homeodomain-like"/>
    <property type="match status" value="1"/>
</dbReference>
<dbReference type="InterPro" id="IPR009057">
    <property type="entry name" value="Homeodomain-like_sf"/>
</dbReference>
<dbReference type="InterPro" id="IPR018060">
    <property type="entry name" value="HTH_AraC"/>
</dbReference>
<dbReference type="InterPro" id="IPR018062">
    <property type="entry name" value="HTH_AraC-typ_CS"/>
</dbReference>
<dbReference type="InterPro" id="IPR020449">
    <property type="entry name" value="Tscrpt_reg_AraC-type_HTH"/>
</dbReference>
<dbReference type="PANTHER" id="PTHR47894">
    <property type="entry name" value="HTH-TYPE TRANSCRIPTIONAL REGULATOR GADX"/>
    <property type="match status" value="1"/>
</dbReference>
<dbReference type="PANTHER" id="PTHR47894:SF4">
    <property type="entry name" value="HTH-TYPE TRANSCRIPTIONAL REGULATOR GADX"/>
    <property type="match status" value="1"/>
</dbReference>
<dbReference type="Pfam" id="PF12833">
    <property type="entry name" value="HTH_18"/>
    <property type="match status" value="1"/>
</dbReference>
<dbReference type="PRINTS" id="PR00032">
    <property type="entry name" value="HTHARAC"/>
</dbReference>
<dbReference type="SMART" id="SM00342">
    <property type="entry name" value="HTH_ARAC"/>
    <property type="match status" value="1"/>
</dbReference>
<dbReference type="SUPFAM" id="SSF46689">
    <property type="entry name" value="Homeodomain-like"/>
    <property type="match status" value="1"/>
</dbReference>
<dbReference type="PROSITE" id="PS00041">
    <property type="entry name" value="HTH_ARAC_FAMILY_1"/>
    <property type="match status" value="1"/>
</dbReference>
<dbReference type="PROSITE" id="PS01124">
    <property type="entry name" value="HTH_ARAC_FAMILY_2"/>
    <property type="match status" value="1"/>
</dbReference>
<name>GADW_ECOLI</name>